<reference key="1">
    <citation type="journal article" date="2010" name="J. Bacteriol.">
        <title>Whole genome sequences of two Xylella fastidiosa strains (M12 and M23) causing almond leaf scorch disease in California.</title>
        <authorList>
            <person name="Chen J."/>
            <person name="Xie G."/>
            <person name="Han S."/>
            <person name="Chertkov O."/>
            <person name="Sims D."/>
            <person name="Civerolo E.L."/>
        </authorList>
    </citation>
    <scope>NUCLEOTIDE SEQUENCE [LARGE SCALE GENOMIC DNA]</scope>
    <source>
        <strain>M12</strain>
    </source>
</reference>
<organism>
    <name type="scientific">Xylella fastidiosa (strain M12)</name>
    <dbReference type="NCBI Taxonomy" id="405440"/>
    <lineage>
        <taxon>Bacteria</taxon>
        <taxon>Pseudomonadati</taxon>
        <taxon>Pseudomonadota</taxon>
        <taxon>Gammaproteobacteria</taxon>
        <taxon>Lysobacterales</taxon>
        <taxon>Lysobacteraceae</taxon>
        <taxon>Xylella</taxon>
    </lineage>
</organism>
<protein>
    <recommendedName>
        <fullName evidence="1">Polyribonucleotide nucleotidyltransferase</fullName>
        <ecNumber evidence="1">2.7.7.8</ecNumber>
    </recommendedName>
    <alternativeName>
        <fullName evidence="1">Polynucleotide phosphorylase</fullName>
        <shortName evidence="1">PNPase</shortName>
    </alternativeName>
</protein>
<accession>B0U1R2</accession>
<keyword id="KW-0963">Cytoplasm</keyword>
<keyword id="KW-0460">Magnesium</keyword>
<keyword id="KW-0479">Metal-binding</keyword>
<keyword id="KW-0548">Nucleotidyltransferase</keyword>
<keyword id="KW-0694">RNA-binding</keyword>
<keyword id="KW-0808">Transferase</keyword>
<name>PNP_XYLFM</name>
<feature type="chain" id="PRO_1000192508" description="Polyribonucleotide nucleotidyltransferase">
    <location>
        <begin position="1"/>
        <end position="700"/>
    </location>
</feature>
<feature type="domain" description="KH" evidence="1">
    <location>
        <begin position="554"/>
        <end position="613"/>
    </location>
</feature>
<feature type="domain" description="S1 motif" evidence="1">
    <location>
        <begin position="623"/>
        <end position="691"/>
    </location>
</feature>
<feature type="binding site" evidence="1">
    <location>
        <position position="487"/>
    </location>
    <ligand>
        <name>Mg(2+)</name>
        <dbReference type="ChEBI" id="CHEBI:18420"/>
    </ligand>
</feature>
<feature type="binding site" evidence="1">
    <location>
        <position position="493"/>
    </location>
    <ligand>
        <name>Mg(2+)</name>
        <dbReference type="ChEBI" id="CHEBI:18420"/>
    </ligand>
</feature>
<evidence type="ECO:0000255" key="1">
    <source>
        <dbReference type="HAMAP-Rule" id="MF_01595"/>
    </source>
</evidence>
<dbReference type="EC" id="2.7.7.8" evidence="1"/>
<dbReference type="EMBL" id="CP000941">
    <property type="protein sequence ID" value="ACA11240.1"/>
    <property type="molecule type" value="Genomic_DNA"/>
</dbReference>
<dbReference type="RefSeq" id="WP_012337582.1">
    <property type="nucleotide sequence ID" value="NC_010513.1"/>
</dbReference>
<dbReference type="SMR" id="B0U1R2"/>
<dbReference type="KEGG" id="xfm:Xfasm12_0207"/>
<dbReference type="HOGENOM" id="CLU_004217_2_2_6"/>
<dbReference type="GO" id="GO:0005829">
    <property type="term" value="C:cytosol"/>
    <property type="evidence" value="ECO:0007669"/>
    <property type="project" value="TreeGrafter"/>
</dbReference>
<dbReference type="GO" id="GO:0000175">
    <property type="term" value="F:3'-5'-RNA exonuclease activity"/>
    <property type="evidence" value="ECO:0007669"/>
    <property type="project" value="TreeGrafter"/>
</dbReference>
<dbReference type="GO" id="GO:0000287">
    <property type="term" value="F:magnesium ion binding"/>
    <property type="evidence" value="ECO:0007669"/>
    <property type="project" value="UniProtKB-UniRule"/>
</dbReference>
<dbReference type="GO" id="GO:0004654">
    <property type="term" value="F:polyribonucleotide nucleotidyltransferase activity"/>
    <property type="evidence" value="ECO:0007669"/>
    <property type="project" value="UniProtKB-UniRule"/>
</dbReference>
<dbReference type="GO" id="GO:0003723">
    <property type="term" value="F:RNA binding"/>
    <property type="evidence" value="ECO:0007669"/>
    <property type="project" value="UniProtKB-UniRule"/>
</dbReference>
<dbReference type="GO" id="GO:0006402">
    <property type="term" value="P:mRNA catabolic process"/>
    <property type="evidence" value="ECO:0007669"/>
    <property type="project" value="UniProtKB-UniRule"/>
</dbReference>
<dbReference type="GO" id="GO:0006396">
    <property type="term" value="P:RNA processing"/>
    <property type="evidence" value="ECO:0007669"/>
    <property type="project" value="InterPro"/>
</dbReference>
<dbReference type="CDD" id="cd02393">
    <property type="entry name" value="KH-I_PNPase"/>
    <property type="match status" value="1"/>
</dbReference>
<dbReference type="CDD" id="cd11363">
    <property type="entry name" value="RNase_PH_PNPase_1"/>
    <property type="match status" value="1"/>
</dbReference>
<dbReference type="CDD" id="cd11364">
    <property type="entry name" value="RNase_PH_PNPase_2"/>
    <property type="match status" value="1"/>
</dbReference>
<dbReference type="CDD" id="cd04472">
    <property type="entry name" value="S1_PNPase"/>
    <property type="match status" value="1"/>
</dbReference>
<dbReference type="FunFam" id="2.40.50.140:FF:000023">
    <property type="entry name" value="Polyribonucleotide nucleotidyltransferase"/>
    <property type="match status" value="1"/>
</dbReference>
<dbReference type="FunFam" id="3.30.1370.10:FF:000001">
    <property type="entry name" value="Polyribonucleotide nucleotidyltransferase"/>
    <property type="match status" value="1"/>
</dbReference>
<dbReference type="FunFam" id="3.30.230.70:FF:000001">
    <property type="entry name" value="Polyribonucleotide nucleotidyltransferase"/>
    <property type="match status" value="1"/>
</dbReference>
<dbReference type="FunFam" id="3.30.230.70:FF:000002">
    <property type="entry name" value="Polyribonucleotide nucleotidyltransferase"/>
    <property type="match status" value="1"/>
</dbReference>
<dbReference type="Gene3D" id="3.30.230.70">
    <property type="entry name" value="GHMP Kinase, N-terminal domain"/>
    <property type="match status" value="2"/>
</dbReference>
<dbReference type="Gene3D" id="3.30.1370.10">
    <property type="entry name" value="K Homology domain, type 1"/>
    <property type="match status" value="1"/>
</dbReference>
<dbReference type="Gene3D" id="2.40.50.140">
    <property type="entry name" value="Nucleic acid-binding proteins"/>
    <property type="match status" value="1"/>
</dbReference>
<dbReference type="HAMAP" id="MF_01595">
    <property type="entry name" value="PNPase"/>
    <property type="match status" value="1"/>
</dbReference>
<dbReference type="InterPro" id="IPR001247">
    <property type="entry name" value="ExoRNase_PH_dom1"/>
</dbReference>
<dbReference type="InterPro" id="IPR015847">
    <property type="entry name" value="ExoRNase_PH_dom2"/>
</dbReference>
<dbReference type="InterPro" id="IPR036345">
    <property type="entry name" value="ExoRNase_PH_dom2_sf"/>
</dbReference>
<dbReference type="InterPro" id="IPR004087">
    <property type="entry name" value="KH_dom"/>
</dbReference>
<dbReference type="InterPro" id="IPR004088">
    <property type="entry name" value="KH_dom_type_1"/>
</dbReference>
<dbReference type="InterPro" id="IPR036612">
    <property type="entry name" value="KH_dom_type_1_sf"/>
</dbReference>
<dbReference type="InterPro" id="IPR012340">
    <property type="entry name" value="NA-bd_OB-fold"/>
</dbReference>
<dbReference type="InterPro" id="IPR012162">
    <property type="entry name" value="PNPase"/>
</dbReference>
<dbReference type="InterPro" id="IPR027408">
    <property type="entry name" value="PNPase/RNase_PH_dom_sf"/>
</dbReference>
<dbReference type="InterPro" id="IPR015848">
    <property type="entry name" value="PNPase_PH_RNA-bd_bac/org-type"/>
</dbReference>
<dbReference type="InterPro" id="IPR036456">
    <property type="entry name" value="PNPase_PH_RNA-bd_sf"/>
</dbReference>
<dbReference type="InterPro" id="IPR020568">
    <property type="entry name" value="Ribosomal_Su5_D2-typ_SF"/>
</dbReference>
<dbReference type="InterPro" id="IPR003029">
    <property type="entry name" value="S1_domain"/>
</dbReference>
<dbReference type="NCBIfam" id="TIGR03591">
    <property type="entry name" value="polynuc_phos"/>
    <property type="match status" value="1"/>
</dbReference>
<dbReference type="NCBIfam" id="NF008805">
    <property type="entry name" value="PRK11824.1"/>
    <property type="match status" value="1"/>
</dbReference>
<dbReference type="PANTHER" id="PTHR11252">
    <property type="entry name" value="POLYRIBONUCLEOTIDE NUCLEOTIDYLTRANSFERASE"/>
    <property type="match status" value="1"/>
</dbReference>
<dbReference type="PANTHER" id="PTHR11252:SF0">
    <property type="entry name" value="POLYRIBONUCLEOTIDE NUCLEOTIDYLTRANSFERASE 1, MITOCHONDRIAL"/>
    <property type="match status" value="1"/>
</dbReference>
<dbReference type="Pfam" id="PF00013">
    <property type="entry name" value="KH_1"/>
    <property type="match status" value="1"/>
</dbReference>
<dbReference type="Pfam" id="PF03726">
    <property type="entry name" value="PNPase"/>
    <property type="match status" value="1"/>
</dbReference>
<dbReference type="Pfam" id="PF01138">
    <property type="entry name" value="RNase_PH"/>
    <property type="match status" value="2"/>
</dbReference>
<dbReference type="Pfam" id="PF03725">
    <property type="entry name" value="RNase_PH_C"/>
    <property type="match status" value="2"/>
</dbReference>
<dbReference type="Pfam" id="PF00575">
    <property type="entry name" value="S1"/>
    <property type="match status" value="1"/>
</dbReference>
<dbReference type="PIRSF" id="PIRSF005499">
    <property type="entry name" value="PNPase"/>
    <property type="match status" value="1"/>
</dbReference>
<dbReference type="SMART" id="SM00322">
    <property type="entry name" value="KH"/>
    <property type="match status" value="1"/>
</dbReference>
<dbReference type="SMART" id="SM00316">
    <property type="entry name" value="S1"/>
    <property type="match status" value="1"/>
</dbReference>
<dbReference type="SUPFAM" id="SSF54791">
    <property type="entry name" value="Eukaryotic type KH-domain (KH-domain type I)"/>
    <property type="match status" value="1"/>
</dbReference>
<dbReference type="SUPFAM" id="SSF50249">
    <property type="entry name" value="Nucleic acid-binding proteins"/>
    <property type="match status" value="1"/>
</dbReference>
<dbReference type="SUPFAM" id="SSF46915">
    <property type="entry name" value="Polynucleotide phosphorylase/guanosine pentaphosphate synthase (PNPase/GPSI), domain 3"/>
    <property type="match status" value="1"/>
</dbReference>
<dbReference type="SUPFAM" id="SSF55666">
    <property type="entry name" value="Ribonuclease PH domain 2-like"/>
    <property type="match status" value="2"/>
</dbReference>
<dbReference type="SUPFAM" id="SSF54211">
    <property type="entry name" value="Ribosomal protein S5 domain 2-like"/>
    <property type="match status" value="2"/>
</dbReference>
<dbReference type="PROSITE" id="PS50084">
    <property type="entry name" value="KH_TYPE_1"/>
    <property type="match status" value="1"/>
</dbReference>
<dbReference type="PROSITE" id="PS50126">
    <property type="entry name" value="S1"/>
    <property type="match status" value="1"/>
</dbReference>
<proteinExistence type="inferred from homology"/>
<sequence length="700" mass="76005">MAKITKTFQYGKHTVTLETGEVARQASGAVIVKMDDTVLLVTVVAAKTAREGQDFFPLTVDYQEKFYAGGRIPGSFFKREGRATEKETLISRLIDRPIRPLFPEDYKNEVQIIAMVMSLDPEIDGDIPAMIGASAALSLAGIPFKGPIGAAKVGYNDGQYILNPTVSELKKSQLELVVAGTANAVLMVESEAALLSEEVMLGAVIFGHREMQKVIQVIDSLTAEAGTEPSDWVPPAKNDALVIALKEVIGGRLSDAFHIREKLQRRDAIAAVKDDVIQQLAGRLEVEGWNLAELLKEFGELEYRTMRDALLDTKVRIDGRSLEAVRPITVKVGVLPRVHGSGLFTRGETQAIVVTTLGTARDGQVIDAVTGEYKENFLFHYNFPPYSVGECGRFGVQKRREIGHGRLARRGVLAVMPSLDEFPYTIRVVSEITESNGSSSMASVCGSSLALMDAGVPVKAPVAGIAMGLVKEGERFVVLSDILGDEDHLGDMDFKVAGTSEGVSALQMDIKIEGITEEIMRQALQQAKVGRLHILGEMDKALAAPRAELSDYAPRLLTIKIHPDKIRDVIGKGGSTIQAITKDTGTQIDIQDDGTIVIASVNNAAAREAKRRIEQITSDVEPGRIYEGKVAKIMDFGAFVTILPGKDGLVHVSQISSERVERVGDKLKEGDVVRVKVLEVDKQGRIRLSIKAVEEEVASI</sequence>
<gene>
    <name evidence="1" type="primary">pnp</name>
    <name type="ordered locus">Xfasm12_0207</name>
</gene>
<comment type="function">
    <text evidence="1">Involved in mRNA degradation. Catalyzes the phosphorolysis of single-stranded polyribonucleotides processively in the 3'- to 5'-direction.</text>
</comment>
<comment type="catalytic activity">
    <reaction evidence="1">
        <text>RNA(n+1) + phosphate = RNA(n) + a ribonucleoside 5'-diphosphate</text>
        <dbReference type="Rhea" id="RHEA:22096"/>
        <dbReference type="Rhea" id="RHEA-COMP:14527"/>
        <dbReference type="Rhea" id="RHEA-COMP:17342"/>
        <dbReference type="ChEBI" id="CHEBI:43474"/>
        <dbReference type="ChEBI" id="CHEBI:57930"/>
        <dbReference type="ChEBI" id="CHEBI:140395"/>
        <dbReference type="EC" id="2.7.7.8"/>
    </reaction>
</comment>
<comment type="cofactor">
    <cofactor evidence="1">
        <name>Mg(2+)</name>
        <dbReference type="ChEBI" id="CHEBI:18420"/>
    </cofactor>
</comment>
<comment type="subunit">
    <text evidence="1">Component of the RNA degradosome, which is a multiprotein complex involved in RNA processing and mRNA degradation.</text>
</comment>
<comment type="subcellular location">
    <subcellularLocation>
        <location evidence="1">Cytoplasm</location>
    </subcellularLocation>
</comment>
<comment type="similarity">
    <text evidence="1">Belongs to the polyribonucleotide nucleotidyltransferase family.</text>
</comment>